<dbReference type="EMBL" id="AE000520">
    <property type="protein sequence ID" value="AAC65058.1"/>
    <property type="molecule type" value="Genomic_DNA"/>
</dbReference>
<dbReference type="PIR" id="G71370">
    <property type="entry name" value="G71370"/>
</dbReference>
<dbReference type="RefSeq" id="WP_010881512.1">
    <property type="nucleotide sequence ID" value="NC_021490.2"/>
</dbReference>
<dbReference type="SMR" id="O83102"/>
<dbReference type="IntAct" id="O83102">
    <property type="interactions" value="11"/>
</dbReference>
<dbReference type="STRING" id="243276.TP_0063"/>
<dbReference type="EnsemblBacteria" id="AAC65058">
    <property type="protein sequence ID" value="AAC65058"/>
    <property type="gene ID" value="TP_0063"/>
</dbReference>
<dbReference type="GeneID" id="93875858"/>
<dbReference type="KEGG" id="tpa:TP_0063"/>
<dbReference type="KEGG" id="tpw:TPANIC_0063"/>
<dbReference type="eggNOG" id="COG0360">
    <property type="taxonomic scope" value="Bacteria"/>
</dbReference>
<dbReference type="HOGENOM" id="CLU_113441_5_1_12"/>
<dbReference type="OrthoDB" id="9812702at2"/>
<dbReference type="Proteomes" id="UP000000811">
    <property type="component" value="Chromosome"/>
</dbReference>
<dbReference type="GO" id="GO:0005737">
    <property type="term" value="C:cytoplasm"/>
    <property type="evidence" value="ECO:0007669"/>
    <property type="project" value="UniProtKB-ARBA"/>
</dbReference>
<dbReference type="GO" id="GO:1990904">
    <property type="term" value="C:ribonucleoprotein complex"/>
    <property type="evidence" value="ECO:0007669"/>
    <property type="project" value="UniProtKB-KW"/>
</dbReference>
<dbReference type="GO" id="GO:0005840">
    <property type="term" value="C:ribosome"/>
    <property type="evidence" value="ECO:0007669"/>
    <property type="project" value="UniProtKB-KW"/>
</dbReference>
<dbReference type="GO" id="GO:0070181">
    <property type="term" value="F:small ribosomal subunit rRNA binding"/>
    <property type="evidence" value="ECO:0007669"/>
    <property type="project" value="TreeGrafter"/>
</dbReference>
<dbReference type="GO" id="GO:0003735">
    <property type="term" value="F:structural constituent of ribosome"/>
    <property type="evidence" value="ECO:0007669"/>
    <property type="project" value="InterPro"/>
</dbReference>
<dbReference type="GO" id="GO:0006412">
    <property type="term" value="P:translation"/>
    <property type="evidence" value="ECO:0007669"/>
    <property type="project" value="UniProtKB-UniRule"/>
</dbReference>
<dbReference type="CDD" id="cd00473">
    <property type="entry name" value="bS6"/>
    <property type="match status" value="1"/>
</dbReference>
<dbReference type="Gene3D" id="3.30.70.60">
    <property type="match status" value="1"/>
</dbReference>
<dbReference type="HAMAP" id="MF_00360">
    <property type="entry name" value="Ribosomal_bS6"/>
    <property type="match status" value="1"/>
</dbReference>
<dbReference type="InterPro" id="IPR000529">
    <property type="entry name" value="Ribosomal_bS6"/>
</dbReference>
<dbReference type="InterPro" id="IPR035980">
    <property type="entry name" value="Ribosomal_bS6_sf"/>
</dbReference>
<dbReference type="InterPro" id="IPR020814">
    <property type="entry name" value="Ribosomal_S6_plastid/chlpt"/>
</dbReference>
<dbReference type="InterPro" id="IPR014717">
    <property type="entry name" value="Transl_elong_EF1B/ribsomal_bS6"/>
</dbReference>
<dbReference type="NCBIfam" id="TIGR00166">
    <property type="entry name" value="S6"/>
    <property type="match status" value="1"/>
</dbReference>
<dbReference type="PANTHER" id="PTHR21011">
    <property type="entry name" value="MITOCHONDRIAL 28S RIBOSOMAL PROTEIN S6"/>
    <property type="match status" value="1"/>
</dbReference>
<dbReference type="PANTHER" id="PTHR21011:SF1">
    <property type="entry name" value="SMALL RIBOSOMAL SUBUNIT PROTEIN BS6M"/>
    <property type="match status" value="1"/>
</dbReference>
<dbReference type="Pfam" id="PF01250">
    <property type="entry name" value="Ribosomal_S6"/>
    <property type="match status" value="1"/>
</dbReference>
<dbReference type="SUPFAM" id="SSF54995">
    <property type="entry name" value="Ribosomal protein S6"/>
    <property type="match status" value="1"/>
</dbReference>
<proteinExistence type="inferred from homology"/>
<feature type="chain" id="PRO_0000176867" description="Small ribosomal subunit protein bS6">
    <location>
        <begin position="1"/>
        <end position="93"/>
    </location>
</feature>
<name>RS6_TREPA</name>
<keyword id="KW-1185">Reference proteome</keyword>
<keyword id="KW-0687">Ribonucleoprotein</keyword>
<keyword id="KW-0689">Ribosomal protein</keyword>
<keyword id="KW-0694">RNA-binding</keyword>
<keyword id="KW-0699">rRNA-binding</keyword>
<accession>O83102</accession>
<sequence>MRTYELMAVFSAHEDLFLQGSTAVRALLQENDAVIAREDHIGERELAYPLKKQKRGRYLLFIVQCEPGKVRELDHKLRLRHDLLTHLFVRVDS</sequence>
<protein>
    <recommendedName>
        <fullName evidence="2">Small ribosomal subunit protein bS6</fullName>
    </recommendedName>
    <alternativeName>
        <fullName>30S ribosomal protein S6</fullName>
    </alternativeName>
</protein>
<evidence type="ECO:0000250" key="1"/>
<evidence type="ECO:0000305" key="2"/>
<gene>
    <name type="primary">rpsF</name>
    <name type="ordered locus">TP_0063</name>
</gene>
<organism>
    <name type="scientific">Treponema pallidum (strain Nichols)</name>
    <dbReference type="NCBI Taxonomy" id="243276"/>
    <lineage>
        <taxon>Bacteria</taxon>
        <taxon>Pseudomonadati</taxon>
        <taxon>Spirochaetota</taxon>
        <taxon>Spirochaetia</taxon>
        <taxon>Spirochaetales</taxon>
        <taxon>Treponemataceae</taxon>
        <taxon>Treponema</taxon>
    </lineage>
</organism>
<comment type="function">
    <text evidence="1">Binds together with bS18 to 16S ribosomal RNA.</text>
</comment>
<comment type="similarity">
    <text evidence="2">Belongs to the bacterial ribosomal protein bS6 family.</text>
</comment>
<reference key="1">
    <citation type="journal article" date="1998" name="Science">
        <title>Complete genome sequence of Treponema pallidum, the syphilis spirochete.</title>
        <authorList>
            <person name="Fraser C.M."/>
            <person name="Norris S.J."/>
            <person name="Weinstock G.M."/>
            <person name="White O."/>
            <person name="Sutton G.G."/>
            <person name="Dodson R.J."/>
            <person name="Gwinn M.L."/>
            <person name="Hickey E.K."/>
            <person name="Clayton R.A."/>
            <person name="Ketchum K.A."/>
            <person name="Sodergren E."/>
            <person name="Hardham J.M."/>
            <person name="McLeod M.P."/>
            <person name="Salzberg S.L."/>
            <person name="Peterson J.D."/>
            <person name="Khalak H.G."/>
            <person name="Richardson D.L."/>
            <person name="Howell J.K."/>
            <person name="Chidambaram M."/>
            <person name="Utterback T.R."/>
            <person name="McDonald L.A."/>
            <person name="Artiach P."/>
            <person name="Bowman C."/>
            <person name="Cotton M.D."/>
            <person name="Fujii C."/>
            <person name="Garland S.A."/>
            <person name="Hatch B."/>
            <person name="Horst K."/>
            <person name="Roberts K.M."/>
            <person name="Sandusky M."/>
            <person name="Weidman J.F."/>
            <person name="Smith H.O."/>
            <person name="Venter J.C."/>
        </authorList>
    </citation>
    <scope>NUCLEOTIDE SEQUENCE [LARGE SCALE GENOMIC DNA]</scope>
    <source>
        <strain>Nichols</strain>
    </source>
</reference>